<keyword id="KW-0040">ANK repeat</keyword>
<keyword id="KW-1185">Reference proteome</keyword>
<keyword id="KW-0677">Repeat</keyword>
<dbReference type="EMBL" id="AY653733">
    <property type="protein sequence ID" value="AAV51034.1"/>
    <property type="molecule type" value="Genomic_DNA"/>
</dbReference>
<dbReference type="SMR" id="Q5UPR6"/>
<dbReference type="KEGG" id="vg:9925433"/>
<dbReference type="OrthoDB" id="32221at10239"/>
<dbReference type="Proteomes" id="UP000001134">
    <property type="component" value="Genome"/>
</dbReference>
<dbReference type="SUPFAM" id="SSF140860">
    <property type="entry name" value="Pseudo ankyrin repeat-like"/>
    <property type="match status" value="1"/>
</dbReference>
<reference key="1">
    <citation type="journal article" date="2004" name="Science">
        <title>The 1.2-megabase genome sequence of Mimivirus.</title>
        <authorList>
            <person name="Raoult D."/>
            <person name="Audic S."/>
            <person name="Robert C."/>
            <person name="Abergel C."/>
            <person name="Renesto P."/>
            <person name="Ogata H."/>
            <person name="La Scola B."/>
            <person name="Susan M."/>
            <person name="Claverie J.-M."/>
        </authorList>
    </citation>
    <scope>NUCLEOTIDE SEQUENCE [LARGE SCALE GENOMIC DNA]</scope>
    <source>
        <strain>Rowbotham-Bradford</strain>
    </source>
</reference>
<organism>
    <name type="scientific">Acanthamoeba polyphaga mimivirus</name>
    <name type="common">APMV</name>
    <dbReference type="NCBI Taxonomy" id="212035"/>
    <lineage>
        <taxon>Viruses</taxon>
        <taxon>Varidnaviria</taxon>
        <taxon>Bamfordvirae</taxon>
        <taxon>Nucleocytoviricota</taxon>
        <taxon>Megaviricetes</taxon>
        <taxon>Imitervirales</taxon>
        <taxon>Mimiviridae</taxon>
        <taxon>Megamimivirinae</taxon>
        <taxon>Mimivirus</taxon>
        <taxon>Mimivirus bradfordmassiliense</taxon>
    </lineage>
</organism>
<accession>Q5UPR6</accession>
<gene>
    <name type="ordered locus">MIMI_L774</name>
</gene>
<sequence>MESKTYYLLRTEEYGDYEMFTIVEDKYFFDHIHRSDKITQVKPDYDRFGFKICEDEQTYLTNYIIELETLSLFDIDTVDRLIASTENKLGIYGHLYCLYIKNNRLDLCDYLIQSNYEYDPTSNCDDILEFVPDENEADVLMYIINNNNFFKIKWSEIATHVIGYTECYDVIDYLVNFLKQIDCNIDYDTIIEECYYSRDGYSDDTFFNETIKILLRLECVNVNKLLEIACIFSITEIVTHLLDIGTEYDFNTILKSHISLHILKIFLNRGNILDSDSVKILLSTNKGWKFSQTFSYLMDEQYITQELVDKNLVDIVIDNNFPVLKRLIEKFDLSELIDYDVVMKKAIMNSSLDIIDYCISNGTDVNNYMTYAFQHYNQSCFTHLLNQGGTLSTDNLVYRPENLRESKYQNVQYIDIVIDNNLDSIENILDNVLEYYHYNTDICNYVLNKINYNSIVLPKLTNKIIRNYYYNECINDKYIDLVKSKINPNDIDKSIIAIVTDDFDSAKQLIMENNLYDNLKILFVAIMKYDIDMLKFLFEINDNSNDYLQWTLLFSLVGNCKSVKFIMEDIGVKPERMKEFRFIMKKSRDTCTKYFKLNGYDVSIDNEDNCDEYPVVKFFKEMGIYLGDYIYTL</sequence>
<name>YL774_MIMIV</name>
<protein>
    <recommendedName>
        <fullName>Putative ankyrin repeat protein L774</fullName>
    </recommendedName>
</protein>
<feature type="chain" id="PRO_0000067197" description="Putative ankyrin repeat protein L774">
    <location>
        <begin position="1"/>
        <end position="633"/>
    </location>
</feature>
<feature type="repeat" description="ANK 1">
    <location>
        <begin position="91"/>
        <end position="120"/>
    </location>
</feature>
<feature type="repeat" description="ANK 2">
    <location>
        <begin position="123"/>
        <end position="152"/>
    </location>
</feature>
<feature type="repeat" description="ANK 3">
    <location>
        <begin position="221"/>
        <end position="250"/>
    </location>
</feature>
<feature type="repeat" description="ANK 4">
    <location>
        <begin position="252"/>
        <end position="275"/>
    </location>
</feature>
<feature type="repeat" description="ANK 5">
    <location>
        <begin position="338"/>
        <end position="367"/>
    </location>
</feature>
<feature type="repeat" description="ANK 6">
    <location>
        <begin position="369"/>
        <end position="393"/>
    </location>
</feature>
<feature type="repeat" description="ANK 7">
    <location>
        <begin position="517"/>
        <end position="546"/>
    </location>
</feature>
<proteinExistence type="predicted"/>
<organismHost>
    <name type="scientific">Acanthamoeba polyphaga</name>
    <name type="common">Amoeba</name>
    <dbReference type="NCBI Taxonomy" id="5757"/>
</organismHost>